<evidence type="ECO:0000255" key="1">
    <source>
        <dbReference type="HAMAP-Rule" id="MF_01393"/>
    </source>
</evidence>
<evidence type="ECO:0007829" key="2">
    <source>
        <dbReference type="PDB" id="7P2Y"/>
    </source>
</evidence>
<protein>
    <recommendedName>
        <fullName evidence="1">ATP synthase subunit a</fullName>
    </recommendedName>
    <alternativeName>
        <fullName evidence="1">ATP synthase F0 sector subunit a</fullName>
    </alternativeName>
    <alternativeName>
        <fullName evidence="1">F-ATPase subunit 6</fullName>
    </alternativeName>
</protein>
<comment type="function">
    <text evidence="1">Key component of the proton channel; it plays a direct role in the translocation of protons across the membrane.</text>
</comment>
<comment type="subunit">
    <text evidence="1">F-type ATPases have 2 components, CF(1) - the catalytic core - and CF(0) - the membrane proton channel. CF(1) has five subunits: alpha(3), beta(3), gamma(1), delta(1), epsilon(1). CF(0) has three main subunits: a(1), b(2) and c(9-12). The alpha and beta chains form an alternating ring which encloses part of the gamma chain. CF(1) is attached to CF(0) by a central stalk formed by the gamma and epsilon chains, while a peripheral stalk is formed by the delta and b chains.</text>
</comment>
<comment type="subcellular location">
    <subcellularLocation>
        <location evidence="1">Cell inner membrane</location>
        <topology evidence="1">Multi-pass membrane protein</topology>
    </subcellularLocation>
</comment>
<comment type="similarity">
    <text evidence="1">Belongs to the ATPase A chain family.</text>
</comment>
<dbReference type="EMBL" id="CP000521">
    <property type="protein sequence ID" value="ABO10631.2"/>
    <property type="molecule type" value="Genomic_DNA"/>
</dbReference>
<dbReference type="RefSeq" id="WP_000718586.1">
    <property type="nucleotide sequence ID" value="NZ_CP053098.1"/>
</dbReference>
<dbReference type="PDB" id="7P2Y">
    <property type="method" value="EM"/>
    <property type="resolution" value="3.10 A"/>
    <property type="chains" value="a=1-291"/>
</dbReference>
<dbReference type="PDB" id="7P3N">
    <property type="method" value="EM"/>
    <property type="resolution" value="4.60 A"/>
    <property type="chains" value="a=1-291"/>
</dbReference>
<dbReference type="PDB" id="7P3W">
    <property type="method" value="EM"/>
    <property type="resolution" value="4.30 A"/>
    <property type="chains" value="a=1-291"/>
</dbReference>
<dbReference type="PDBsum" id="7P2Y"/>
<dbReference type="PDBsum" id="7P3N"/>
<dbReference type="PDBsum" id="7P3W"/>
<dbReference type="EMDB" id="EMD-13174"/>
<dbReference type="EMDB" id="EMD-13181"/>
<dbReference type="EMDB" id="EMD-13186"/>
<dbReference type="SMR" id="A3M137"/>
<dbReference type="GeneID" id="92892161"/>
<dbReference type="KEGG" id="acb:A1S_0148"/>
<dbReference type="HOGENOM" id="CLU_041018_1_0_6"/>
<dbReference type="GO" id="GO:0005886">
    <property type="term" value="C:plasma membrane"/>
    <property type="evidence" value="ECO:0007669"/>
    <property type="project" value="UniProtKB-SubCell"/>
</dbReference>
<dbReference type="GO" id="GO:0045259">
    <property type="term" value="C:proton-transporting ATP synthase complex"/>
    <property type="evidence" value="ECO:0007669"/>
    <property type="project" value="UniProtKB-KW"/>
</dbReference>
<dbReference type="GO" id="GO:0046933">
    <property type="term" value="F:proton-transporting ATP synthase activity, rotational mechanism"/>
    <property type="evidence" value="ECO:0007669"/>
    <property type="project" value="UniProtKB-UniRule"/>
</dbReference>
<dbReference type="GO" id="GO:0042777">
    <property type="term" value="P:proton motive force-driven plasma membrane ATP synthesis"/>
    <property type="evidence" value="ECO:0007669"/>
    <property type="project" value="TreeGrafter"/>
</dbReference>
<dbReference type="CDD" id="cd00310">
    <property type="entry name" value="ATP-synt_Fo_a_6"/>
    <property type="match status" value="1"/>
</dbReference>
<dbReference type="FunFam" id="1.20.120.220:FF:000002">
    <property type="entry name" value="ATP synthase subunit a"/>
    <property type="match status" value="1"/>
</dbReference>
<dbReference type="Gene3D" id="1.20.120.220">
    <property type="entry name" value="ATP synthase, F0 complex, subunit A"/>
    <property type="match status" value="1"/>
</dbReference>
<dbReference type="HAMAP" id="MF_01393">
    <property type="entry name" value="ATP_synth_a_bact"/>
    <property type="match status" value="1"/>
</dbReference>
<dbReference type="InterPro" id="IPR045082">
    <property type="entry name" value="ATP_syn_F0_a_bact/chloroplast"/>
</dbReference>
<dbReference type="InterPro" id="IPR000568">
    <property type="entry name" value="ATP_synth_F0_asu"/>
</dbReference>
<dbReference type="InterPro" id="IPR023011">
    <property type="entry name" value="ATP_synth_F0_asu_AS"/>
</dbReference>
<dbReference type="InterPro" id="IPR035908">
    <property type="entry name" value="F0_ATP_A_sf"/>
</dbReference>
<dbReference type="NCBIfam" id="TIGR01131">
    <property type="entry name" value="ATP_synt_6_or_A"/>
    <property type="match status" value="1"/>
</dbReference>
<dbReference type="NCBIfam" id="NF004477">
    <property type="entry name" value="PRK05815.1-1"/>
    <property type="match status" value="1"/>
</dbReference>
<dbReference type="PANTHER" id="PTHR42823">
    <property type="entry name" value="ATP SYNTHASE SUBUNIT A, CHLOROPLASTIC"/>
    <property type="match status" value="1"/>
</dbReference>
<dbReference type="PANTHER" id="PTHR42823:SF3">
    <property type="entry name" value="ATP SYNTHASE SUBUNIT A, CHLOROPLASTIC"/>
    <property type="match status" value="1"/>
</dbReference>
<dbReference type="Pfam" id="PF00119">
    <property type="entry name" value="ATP-synt_A"/>
    <property type="match status" value="1"/>
</dbReference>
<dbReference type="SUPFAM" id="SSF81336">
    <property type="entry name" value="F1F0 ATP synthase subunit A"/>
    <property type="match status" value="1"/>
</dbReference>
<dbReference type="PROSITE" id="PS00449">
    <property type="entry name" value="ATPASE_A"/>
    <property type="match status" value="1"/>
</dbReference>
<name>ATP6_ACIBT</name>
<proteinExistence type="evidence at protein level"/>
<sequence>MAAEEHALTSTEYIKHHLTNMTYGKMPDGTWKLAETAEEAHSMGFTAIHLDSMGWSIGLGVIFCLLFWIVARAANAGVPTKFQSAIEMIIEFVDSSVRDTFHGKSRLIAPLALTIFVWIFLMNLMDLIPVDWIPQVAAFVGANVFGMDPHHVYFKIVPSTDPNITLGMSLSVFVLILFYSIREKGVGGFVGELALNPFNPSNPVAKALLIPVNLILELVTFLARPISLALRLFGNMYAGELIFILIALLPFWIQWALSVPWAIFHILVITLQAFIFMMLTIVYLSMASEKH</sequence>
<reference key="1">
    <citation type="journal article" date="2007" name="Genes Dev.">
        <title>New insights into Acinetobacter baumannii pathogenesis revealed by high-density pyrosequencing and transposon mutagenesis.</title>
        <authorList>
            <person name="Smith M.G."/>
            <person name="Gianoulis T.A."/>
            <person name="Pukatzki S."/>
            <person name="Mekalanos J.J."/>
            <person name="Ornston L.N."/>
            <person name="Gerstein M."/>
            <person name="Snyder M."/>
        </authorList>
    </citation>
    <scope>NUCLEOTIDE SEQUENCE [LARGE SCALE GENOMIC DNA]</scope>
    <source>
        <strain>ATCC 17978 / DSM 105126 / CIP 53.77 / LMG 1025 / NCDC KC755 / 5377</strain>
    </source>
</reference>
<gene>
    <name evidence="1" type="primary">atpB</name>
    <name type="ordered locus">A1S_0148</name>
</gene>
<keyword id="KW-0002">3D-structure</keyword>
<keyword id="KW-0066">ATP synthesis</keyword>
<keyword id="KW-0997">Cell inner membrane</keyword>
<keyword id="KW-1003">Cell membrane</keyword>
<keyword id="KW-0138">CF(0)</keyword>
<keyword id="KW-0375">Hydrogen ion transport</keyword>
<keyword id="KW-0406">Ion transport</keyword>
<keyword id="KW-0472">Membrane</keyword>
<keyword id="KW-0812">Transmembrane</keyword>
<keyword id="KW-1133">Transmembrane helix</keyword>
<keyword id="KW-0813">Transport</keyword>
<organism>
    <name type="scientific">Acinetobacter baumannii (strain ATCC 17978 / DSM 105126 / CIP 53.77 / LMG 1025 / NCDC KC755 / 5377)</name>
    <dbReference type="NCBI Taxonomy" id="400667"/>
    <lineage>
        <taxon>Bacteria</taxon>
        <taxon>Pseudomonadati</taxon>
        <taxon>Pseudomonadota</taxon>
        <taxon>Gammaproteobacteria</taxon>
        <taxon>Moraxellales</taxon>
        <taxon>Moraxellaceae</taxon>
        <taxon>Acinetobacter</taxon>
        <taxon>Acinetobacter calcoaceticus/baumannii complex</taxon>
    </lineage>
</organism>
<accession>A3M137</accession>
<feature type="chain" id="PRO_0000362219" description="ATP synthase subunit a">
    <location>
        <begin position="1"/>
        <end position="291"/>
    </location>
</feature>
<feature type="transmembrane region" description="Helical" evidence="1">
    <location>
        <begin position="50"/>
        <end position="70"/>
    </location>
</feature>
<feature type="transmembrane region" description="Helical" evidence="1">
    <location>
        <begin position="108"/>
        <end position="128"/>
    </location>
</feature>
<feature type="transmembrane region" description="Helical" evidence="1">
    <location>
        <begin position="129"/>
        <end position="149"/>
    </location>
</feature>
<feature type="transmembrane region" description="Helical" evidence="1">
    <location>
        <begin position="161"/>
        <end position="181"/>
    </location>
</feature>
<feature type="transmembrane region" description="Helical" evidence="1">
    <location>
        <begin position="203"/>
        <end position="223"/>
    </location>
</feature>
<feature type="transmembrane region" description="Helical" evidence="1">
    <location>
        <begin position="241"/>
        <end position="261"/>
    </location>
</feature>
<feature type="transmembrane region" description="Helical" evidence="1">
    <location>
        <begin position="262"/>
        <end position="282"/>
    </location>
</feature>
<feature type="helix" evidence="2">
    <location>
        <begin position="16"/>
        <end position="25"/>
    </location>
</feature>
<feature type="helix" evidence="2">
    <location>
        <begin position="29"/>
        <end position="32"/>
    </location>
</feature>
<feature type="helix" evidence="2">
    <location>
        <begin position="53"/>
        <end position="72"/>
    </location>
</feature>
<feature type="helix" evidence="2">
    <location>
        <begin position="81"/>
        <end position="100"/>
    </location>
</feature>
<feature type="helix" evidence="2">
    <location>
        <begin position="108"/>
        <end position="124"/>
    </location>
</feature>
<feature type="helix" evidence="2">
    <location>
        <begin position="125"/>
        <end position="127"/>
    </location>
</feature>
<feature type="helix" evidence="2">
    <location>
        <begin position="132"/>
        <end position="143"/>
    </location>
</feature>
<feature type="helix" evidence="2">
    <location>
        <begin position="148"/>
        <end position="153"/>
    </location>
</feature>
<feature type="helix" evidence="2">
    <location>
        <begin position="162"/>
        <end position="180"/>
    </location>
</feature>
<feature type="helix" evidence="2">
    <location>
        <begin position="186"/>
        <end position="190"/>
    </location>
</feature>
<feature type="helix" evidence="2">
    <location>
        <begin position="202"/>
        <end position="208"/>
    </location>
</feature>
<feature type="helix" evidence="2">
    <location>
        <begin position="211"/>
        <end position="221"/>
    </location>
</feature>
<feature type="helix" evidence="2">
    <location>
        <begin position="223"/>
        <end position="246"/>
    </location>
</feature>
<feature type="turn" evidence="2">
    <location>
        <begin position="256"/>
        <end position="258"/>
    </location>
</feature>
<feature type="helix" evidence="2">
    <location>
        <begin position="259"/>
        <end position="287"/>
    </location>
</feature>